<gene>
    <name evidence="1" type="primary">mtnC</name>
    <name type="ordered locus">GDI0587</name>
    <name type="ordered locus">Gdia_1413</name>
</gene>
<comment type="function">
    <text evidence="1">Bifunctional enzyme that catalyzes the enolization of 2,3-diketo-5-methylthiopentyl-1-phosphate (DK-MTP-1-P) into the intermediate 2-hydroxy-3-keto-5-methylthiopentenyl-1-phosphate (HK-MTPenyl-1-P), which is then dephosphorylated to form the acireductone 1,2-dihydroxy-3-keto-5-methylthiopentene (DHK-MTPene).</text>
</comment>
<comment type="catalytic activity">
    <reaction evidence="1">
        <text>5-methylsulfanyl-2,3-dioxopentyl phosphate + H2O = 1,2-dihydroxy-5-(methylsulfanyl)pent-1-en-3-one + phosphate</text>
        <dbReference type="Rhea" id="RHEA:21700"/>
        <dbReference type="ChEBI" id="CHEBI:15377"/>
        <dbReference type="ChEBI" id="CHEBI:43474"/>
        <dbReference type="ChEBI" id="CHEBI:49252"/>
        <dbReference type="ChEBI" id="CHEBI:58828"/>
        <dbReference type="EC" id="3.1.3.77"/>
    </reaction>
</comment>
<comment type="cofactor">
    <cofactor evidence="1">
        <name>Mg(2+)</name>
        <dbReference type="ChEBI" id="CHEBI:18420"/>
    </cofactor>
    <text evidence="1">Binds 1 Mg(2+) ion per subunit.</text>
</comment>
<comment type="pathway">
    <text evidence="1">Amino-acid biosynthesis; L-methionine biosynthesis via salvage pathway; L-methionine from S-methyl-5-thio-alpha-D-ribose 1-phosphate: step 3/6.</text>
</comment>
<comment type="pathway">
    <text evidence="1">Amino-acid biosynthesis; L-methionine biosynthesis via salvage pathway; L-methionine from S-methyl-5-thio-alpha-D-ribose 1-phosphate: step 4/6.</text>
</comment>
<comment type="subunit">
    <text evidence="1">Monomer.</text>
</comment>
<comment type="similarity">
    <text evidence="1">Belongs to the HAD-like hydrolase superfamily. MasA/MtnC family.</text>
</comment>
<comment type="sequence caution" evidence="2">
    <conflict type="erroneous initiation">
        <sequence resource="EMBL-CDS" id="ACI51193"/>
    </conflict>
</comment>
<comment type="sequence caution" evidence="2">
    <conflict type="erroneous initiation">
        <sequence resource="EMBL-CDS" id="CAP54530"/>
    </conflict>
</comment>
<evidence type="ECO:0000255" key="1">
    <source>
        <dbReference type="HAMAP-Rule" id="MF_01681"/>
    </source>
</evidence>
<evidence type="ECO:0000305" key="2"/>
<sequence>MTASTDAIDSVLLDIEGTTIPVAFVHQVLFPYARAAMPGLLAQRADDPAVRAAVADIAALAPGVPPLDQLNAWMDRDEKIGPLKALQGLAWEEGYRTGALRATLYPDVVPALRRWRAAGLRLAVYSSGSEAAQRLIYGHTTDGDVAGLFSGFYDLRIGGKRAAGSYRAILAETGWAAGRTLFLSDITAELDAAEEAGLRTCQLVRPEDGTVAGDRHPVATTLDDVARRFALPVAA</sequence>
<reference key="1">
    <citation type="journal article" date="2009" name="BMC Genomics">
        <title>Complete genome sequence of the sugarcane nitrogen-fixing endophyte Gluconacetobacter diazotrophicus Pal5.</title>
        <authorList>
            <person name="Bertalan M."/>
            <person name="Albano R."/>
            <person name="de Padua V."/>
            <person name="Rouws L."/>
            <person name="Rojas C."/>
            <person name="Hemerly A."/>
            <person name="Teixeira K."/>
            <person name="Schwab S."/>
            <person name="Araujo J."/>
            <person name="Oliveira A."/>
            <person name="Franca L."/>
            <person name="Magalhaes V."/>
            <person name="Alqueres S."/>
            <person name="Cardoso A."/>
            <person name="Almeida W."/>
            <person name="Loureiro M.M."/>
            <person name="Nogueira E."/>
            <person name="Cidade D."/>
            <person name="Oliveira D."/>
            <person name="Simao T."/>
            <person name="Macedo J."/>
            <person name="Valadao A."/>
            <person name="Dreschsel M."/>
            <person name="Freitas F."/>
            <person name="Vidal M."/>
            <person name="Guedes H."/>
            <person name="Rodrigues E."/>
            <person name="Meneses C."/>
            <person name="Brioso P."/>
            <person name="Pozzer L."/>
            <person name="Figueiredo D."/>
            <person name="Montano H."/>
            <person name="Junior J."/>
            <person name="de Souza Filho G."/>
            <person name="Martin Quintana Flores V."/>
            <person name="Ferreira B."/>
            <person name="Branco A."/>
            <person name="Gonzalez P."/>
            <person name="Guillobel H."/>
            <person name="Lemos M."/>
            <person name="Seibel L."/>
            <person name="Macedo J."/>
            <person name="Alves-Ferreira M."/>
            <person name="Sachetto-Martins G."/>
            <person name="Coelho A."/>
            <person name="Santos E."/>
            <person name="Amaral G."/>
            <person name="Neves A."/>
            <person name="Pacheco A.B."/>
            <person name="Carvalho D."/>
            <person name="Lery L."/>
            <person name="Bisch P."/>
            <person name="Rossle S.C."/>
            <person name="Urmenyi T."/>
            <person name="Rael Pereira A."/>
            <person name="Silva R."/>
            <person name="Rondinelli E."/>
            <person name="von Kruger W."/>
            <person name="Martins O."/>
            <person name="Baldani J.I."/>
            <person name="Ferreira P.C."/>
        </authorList>
    </citation>
    <scope>NUCLEOTIDE SEQUENCE [LARGE SCALE GENOMIC DNA]</scope>
    <source>
        <strain>ATCC 49037 / DSM 5601 / CCUG 37298 / CIP 103539 / LMG 7603 / PAl5</strain>
    </source>
</reference>
<reference key="2">
    <citation type="journal article" date="2010" name="Stand. Genomic Sci.">
        <title>Two genome sequences of the same bacterial strain, Gluconacetobacter diazotrophicus PAl 5, suggest a new standard in genome sequence submission.</title>
        <authorList>
            <person name="Giongo A."/>
            <person name="Tyler H.L."/>
            <person name="Zipperer U.N."/>
            <person name="Triplett E.W."/>
        </authorList>
    </citation>
    <scope>NUCLEOTIDE SEQUENCE [LARGE SCALE GENOMIC DNA]</scope>
    <source>
        <strain>ATCC 49037 / DSM 5601 / CCUG 37298 / CIP 103539 / LMG 7603 / PAl5</strain>
    </source>
</reference>
<dbReference type="EC" id="3.1.3.77" evidence="1"/>
<dbReference type="EMBL" id="AM889285">
    <property type="protein sequence ID" value="CAP54530.1"/>
    <property type="status" value="ALT_INIT"/>
    <property type="molecule type" value="Genomic_DNA"/>
</dbReference>
<dbReference type="EMBL" id="CP001189">
    <property type="protein sequence ID" value="ACI51193.1"/>
    <property type="status" value="ALT_INIT"/>
    <property type="molecule type" value="Genomic_DNA"/>
</dbReference>
<dbReference type="RefSeq" id="WP_012223109.1">
    <property type="nucleotide sequence ID" value="NC_011365.1"/>
</dbReference>
<dbReference type="SMR" id="A9H8G7"/>
<dbReference type="STRING" id="272568.GDI0587"/>
<dbReference type="KEGG" id="gdi:GDI0587"/>
<dbReference type="KEGG" id="gdj:Gdia_1413"/>
<dbReference type="eggNOG" id="COG4229">
    <property type="taxonomic scope" value="Bacteria"/>
</dbReference>
<dbReference type="HOGENOM" id="CLU_023273_0_0_5"/>
<dbReference type="OrthoDB" id="9797416at2"/>
<dbReference type="UniPathway" id="UPA00904">
    <property type="reaction ID" value="UER00876"/>
</dbReference>
<dbReference type="UniPathway" id="UPA00904">
    <property type="reaction ID" value="UER00877"/>
</dbReference>
<dbReference type="Proteomes" id="UP000001176">
    <property type="component" value="Chromosome"/>
</dbReference>
<dbReference type="GO" id="GO:0043715">
    <property type="term" value="F:2,3-diketo-5-methylthiopentyl-1-phosphate enolase activity"/>
    <property type="evidence" value="ECO:0007669"/>
    <property type="project" value="UniProtKB-UniRule"/>
</dbReference>
<dbReference type="GO" id="GO:0043716">
    <property type="term" value="F:2-hydroxy-3-keto-5-methylthiopentenyl-1-phosphate phosphatase activity"/>
    <property type="evidence" value="ECO:0007669"/>
    <property type="project" value="UniProtKB-UniRule"/>
</dbReference>
<dbReference type="GO" id="GO:0043874">
    <property type="term" value="F:acireductone synthase activity"/>
    <property type="evidence" value="ECO:0007669"/>
    <property type="project" value="UniProtKB-EC"/>
</dbReference>
<dbReference type="GO" id="GO:0000287">
    <property type="term" value="F:magnesium ion binding"/>
    <property type="evidence" value="ECO:0007669"/>
    <property type="project" value="UniProtKB-UniRule"/>
</dbReference>
<dbReference type="GO" id="GO:0019509">
    <property type="term" value="P:L-methionine salvage from methylthioadenosine"/>
    <property type="evidence" value="ECO:0007669"/>
    <property type="project" value="UniProtKB-UniRule"/>
</dbReference>
<dbReference type="CDD" id="cd01629">
    <property type="entry name" value="HAD_EP"/>
    <property type="match status" value="1"/>
</dbReference>
<dbReference type="Gene3D" id="1.10.720.60">
    <property type="match status" value="1"/>
</dbReference>
<dbReference type="Gene3D" id="3.40.50.1000">
    <property type="entry name" value="HAD superfamily/HAD-like"/>
    <property type="match status" value="1"/>
</dbReference>
<dbReference type="HAMAP" id="MF_01681">
    <property type="entry name" value="Salvage_MtnC"/>
    <property type="match status" value="1"/>
</dbReference>
<dbReference type="InterPro" id="IPR023943">
    <property type="entry name" value="Enolase-ppase_E1"/>
</dbReference>
<dbReference type="InterPro" id="IPR036412">
    <property type="entry name" value="HAD-like_sf"/>
</dbReference>
<dbReference type="InterPro" id="IPR023214">
    <property type="entry name" value="HAD_sf"/>
</dbReference>
<dbReference type="NCBIfam" id="TIGR01691">
    <property type="entry name" value="enolase-ppase"/>
    <property type="match status" value="1"/>
</dbReference>
<dbReference type="PANTHER" id="PTHR20371">
    <property type="entry name" value="ENOLASE-PHOSPHATASE E1"/>
    <property type="match status" value="1"/>
</dbReference>
<dbReference type="PANTHER" id="PTHR20371:SF1">
    <property type="entry name" value="ENOLASE-PHOSPHATASE E1"/>
    <property type="match status" value="1"/>
</dbReference>
<dbReference type="Pfam" id="PF00702">
    <property type="entry name" value="Hydrolase"/>
    <property type="match status" value="1"/>
</dbReference>
<dbReference type="SFLD" id="SFLDG01133">
    <property type="entry name" value="C1.5.4:_Enolase-phosphatase_Li"/>
    <property type="match status" value="1"/>
</dbReference>
<dbReference type="SFLD" id="SFLDS00003">
    <property type="entry name" value="Haloacid_Dehalogenase"/>
    <property type="match status" value="1"/>
</dbReference>
<dbReference type="SUPFAM" id="SSF56784">
    <property type="entry name" value="HAD-like"/>
    <property type="match status" value="1"/>
</dbReference>
<keyword id="KW-0028">Amino-acid biosynthesis</keyword>
<keyword id="KW-0378">Hydrolase</keyword>
<keyword id="KW-0460">Magnesium</keyword>
<keyword id="KW-0479">Metal-binding</keyword>
<keyword id="KW-0486">Methionine biosynthesis</keyword>
<keyword id="KW-1185">Reference proteome</keyword>
<feature type="chain" id="PRO_0000357367" description="Enolase-phosphatase E1">
    <location>
        <begin position="1"/>
        <end position="235"/>
    </location>
</feature>
<name>MTNC_GLUDA</name>
<proteinExistence type="inferred from homology"/>
<protein>
    <recommendedName>
        <fullName evidence="1">Enolase-phosphatase E1</fullName>
        <ecNumber evidence="1">3.1.3.77</ecNumber>
    </recommendedName>
    <alternativeName>
        <fullName evidence="1">2,3-diketo-5-methylthio-1-phosphopentane phosphatase</fullName>
    </alternativeName>
</protein>
<accession>A9H8G7</accession>
<organism>
    <name type="scientific">Gluconacetobacter diazotrophicus (strain ATCC 49037 / DSM 5601 / CCUG 37298 / CIP 103539 / LMG 7603 / PAl5)</name>
    <dbReference type="NCBI Taxonomy" id="272568"/>
    <lineage>
        <taxon>Bacteria</taxon>
        <taxon>Pseudomonadati</taxon>
        <taxon>Pseudomonadota</taxon>
        <taxon>Alphaproteobacteria</taxon>
        <taxon>Acetobacterales</taxon>
        <taxon>Acetobacteraceae</taxon>
        <taxon>Gluconacetobacter</taxon>
    </lineage>
</organism>